<reference key="1">
    <citation type="journal article" date="1999" name="J. Biol. Chem.">
        <title>An SC35-like protein and a novel serine/arginine-rich protein interact with Arabidopsis U1-70K protein.</title>
        <authorList>
            <person name="Golovkin M."/>
            <person name="Reddy A.S.N."/>
        </authorList>
    </citation>
    <scope>NUCLEOTIDE SEQUENCE [MRNA] (ISOFORM 1)</scope>
    <scope>INTERACTION WITH AFC2; RNU1 AND SCL33</scope>
    <scope>PHOSPHORYLATION BY AFC2</scope>
    <scope>TISSUE SPECIFICITY</scope>
</reference>
<reference key="2">
    <citation type="journal article" date="2000" name="Nature">
        <title>Sequence and analysis of chromosome 1 of the plant Arabidopsis thaliana.</title>
        <authorList>
            <person name="Theologis A."/>
            <person name="Ecker J.R."/>
            <person name="Palm C.J."/>
            <person name="Federspiel N.A."/>
            <person name="Kaul S."/>
            <person name="White O."/>
            <person name="Alonso J."/>
            <person name="Altafi H."/>
            <person name="Araujo R."/>
            <person name="Bowman C.L."/>
            <person name="Brooks S.Y."/>
            <person name="Buehler E."/>
            <person name="Chan A."/>
            <person name="Chao Q."/>
            <person name="Chen H."/>
            <person name="Cheuk R.F."/>
            <person name="Chin C.W."/>
            <person name="Chung M.K."/>
            <person name="Conn L."/>
            <person name="Conway A.B."/>
            <person name="Conway A.R."/>
            <person name="Creasy T.H."/>
            <person name="Dewar K."/>
            <person name="Dunn P."/>
            <person name="Etgu P."/>
            <person name="Feldblyum T.V."/>
            <person name="Feng J.-D."/>
            <person name="Fong B."/>
            <person name="Fujii C.Y."/>
            <person name="Gill J.E."/>
            <person name="Goldsmith A.D."/>
            <person name="Haas B."/>
            <person name="Hansen N.F."/>
            <person name="Hughes B."/>
            <person name="Huizar L."/>
            <person name="Hunter J.L."/>
            <person name="Jenkins J."/>
            <person name="Johnson-Hopson C."/>
            <person name="Khan S."/>
            <person name="Khaykin E."/>
            <person name="Kim C.J."/>
            <person name="Koo H.L."/>
            <person name="Kremenetskaia I."/>
            <person name="Kurtz D.B."/>
            <person name="Kwan A."/>
            <person name="Lam B."/>
            <person name="Langin-Hooper S."/>
            <person name="Lee A."/>
            <person name="Lee J.M."/>
            <person name="Lenz C.A."/>
            <person name="Li J.H."/>
            <person name="Li Y.-P."/>
            <person name="Lin X."/>
            <person name="Liu S.X."/>
            <person name="Liu Z.A."/>
            <person name="Luros J.S."/>
            <person name="Maiti R."/>
            <person name="Marziali A."/>
            <person name="Militscher J."/>
            <person name="Miranda M."/>
            <person name="Nguyen M."/>
            <person name="Nierman W.C."/>
            <person name="Osborne B.I."/>
            <person name="Pai G."/>
            <person name="Peterson J."/>
            <person name="Pham P.K."/>
            <person name="Rizzo M."/>
            <person name="Rooney T."/>
            <person name="Rowley D."/>
            <person name="Sakano H."/>
            <person name="Salzberg S.L."/>
            <person name="Schwartz J.R."/>
            <person name="Shinn P."/>
            <person name="Southwick A.M."/>
            <person name="Sun H."/>
            <person name="Tallon L.J."/>
            <person name="Tambunga G."/>
            <person name="Toriumi M.J."/>
            <person name="Town C.D."/>
            <person name="Utterback T."/>
            <person name="Van Aken S."/>
            <person name="Vaysberg M."/>
            <person name="Vysotskaia V.S."/>
            <person name="Walker M."/>
            <person name="Wu D."/>
            <person name="Yu G."/>
            <person name="Fraser C.M."/>
            <person name="Venter J.C."/>
            <person name="Davis R.W."/>
        </authorList>
    </citation>
    <scope>NUCLEOTIDE SEQUENCE [LARGE SCALE GENOMIC DNA]</scope>
    <source>
        <strain>cv. Columbia</strain>
    </source>
</reference>
<reference key="3">
    <citation type="journal article" date="2017" name="Plant J.">
        <title>Araport11: a complete reannotation of the Arabidopsis thaliana reference genome.</title>
        <authorList>
            <person name="Cheng C.Y."/>
            <person name="Krishnakumar V."/>
            <person name="Chan A.P."/>
            <person name="Thibaud-Nissen F."/>
            <person name="Schobel S."/>
            <person name="Town C.D."/>
        </authorList>
    </citation>
    <scope>GENOME REANNOTATION</scope>
    <source>
        <strain>cv. Columbia</strain>
    </source>
</reference>
<reference key="4">
    <citation type="journal article" date="2003" name="Science">
        <title>Empirical analysis of transcriptional activity in the Arabidopsis genome.</title>
        <authorList>
            <person name="Yamada K."/>
            <person name="Lim J."/>
            <person name="Dale J.M."/>
            <person name="Chen H."/>
            <person name="Shinn P."/>
            <person name="Palm C.J."/>
            <person name="Southwick A.M."/>
            <person name="Wu H.C."/>
            <person name="Kim C.J."/>
            <person name="Nguyen M."/>
            <person name="Pham P.K."/>
            <person name="Cheuk R.F."/>
            <person name="Karlin-Newmann G."/>
            <person name="Liu S.X."/>
            <person name="Lam B."/>
            <person name="Sakano H."/>
            <person name="Wu T."/>
            <person name="Yu G."/>
            <person name="Miranda M."/>
            <person name="Quach H.L."/>
            <person name="Tripp M."/>
            <person name="Chang C.H."/>
            <person name="Lee J.M."/>
            <person name="Toriumi M.J."/>
            <person name="Chan M.M."/>
            <person name="Tang C.C."/>
            <person name="Onodera C.S."/>
            <person name="Deng J.M."/>
            <person name="Akiyama K."/>
            <person name="Ansari Y."/>
            <person name="Arakawa T."/>
            <person name="Banh J."/>
            <person name="Banno F."/>
            <person name="Bowser L."/>
            <person name="Brooks S.Y."/>
            <person name="Carninci P."/>
            <person name="Chao Q."/>
            <person name="Choy N."/>
            <person name="Enju A."/>
            <person name="Goldsmith A.D."/>
            <person name="Gurjal M."/>
            <person name="Hansen N.F."/>
            <person name="Hayashizaki Y."/>
            <person name="Johnson-Hopson C."/>
            <person name="Hsuan V.W."/>
            <person name="Iida K."/>
            <person name="Karnes M."/>
            <person name="Khan S."/>
            <person name="Koesema E."/>
            <person name="Ishida J."/>
            <person name="Jiang P.X."/>
            <person name="Jones T."/>
            <person name="Kawai J."/>
            <person name="Kamiya A."/>
            <person name="Meyers C."/>
            <person name="Nakajima M."/>
            <person name="Narusaka M."/>
            <person name="Seki M."/>
            <person name="Sakurai T."/>
            <person name="Satou M."/>
            <person name="Tamse R."/>
            <person name="Vaysberg M."/>
            <person name="Wallender E.K."/>
            <person name="Wong C."/>
            <person name="Yamamura Y."/>
            <person name="Yuan S."/>
            <person name="Shinozaki K."/>
            <person name="Davis R.W."/>
            <person name="Theologis A."/>
            <person name="Ecker J.R."/>
        </authorList>
    </citation>
    <scope>NUCLEOTIDE SEQUENCE [LARGE SCALE MRNA] (ISOFORM 1)</scope>
    <source>
        <strain>cv. Columbia</strain>
    </source>
</reference>
<reference key="5">
    <citation type="submission" date="2004-12" db="EMBL/GenBank/DDBJ databases">
        <title>Arabidopsis ORF clones.</title>
        <authorList>
            <person name="Kim C.J."/>
            <person name="Chen H."/>
            <person name="Cheuk R.F."/>
            <person name="Shinn P."/>
            <person name="Ecker J.R."/>
        </authorList>
    </citation>
    <scope>NUCLEOTIDE SEQUENCE [LARGE SCALE MRNA] (ISOFORMS 1 AND 2)</scope>
    <source>
        <strain>cv. Columbia</strain>
    </source>
</reference>
<reference key="6">
    <citation type="journal article" date="2003" name="Plant J.">
        <title>Nuclear localization and in vivo dynamics of a plant-specific serine/arginine-rich protein.</title>
        <authorList>
            <person name="Ali G.S."/>
            <person name="Golovkin M."/>
            <person name="Reddy A.S.N."/>
        </authorList>
    </citation>
    <scope>SUBCELLULAR LOCATION</scope>
    <scope>PHOSPHORYLATION</scope>
    <scope>TISSUE SPECIFICITY</scope>
    <scope>INTERACTION WITH RNU1</scope>
</reference>
<reference key="7">
    <citation type="journal article" date="2004" name="Biochem. Soc. Trans.">
        <title>A plethora of plant serine/arginine-rich proteins: redundancy or evolution of novel gene functions?</title>
        <authorList>
            <person name="Kalyna M."/>
            <person name="Barta A."/>
        </authorList>
    </citation>
    <scope>REVIEW</scope>
</reference>
<reference key="8">
    <citation type="journal article" date="2006" name="J. Cell Sci.">
        <title>ATP, phosphorylation and transcription regulate the mobility of plant splicing factors.</title>
        <authorList>
            <person name="Ali G.S."/>
            <person name="Reddy A.S."/>
        </authorList>
    </citation>
    <scope>SUBCELLULAR LOCATION</scope>
</reference>
<reference key="9">
    <citation type="journal article" date="2006" name="Nucleic Acids Res.">
        <title>Phosphoproteomics reveals extensive in vivo phosphorylation of Arabidopsis proteins involved in RNA metabolism.</title>
        <authorList>
            <person name="de la Fuente van Bentem S."/>
            <person name="Anrather D."/>
            <person name="Roitinger E."/>
            <person name="Djamei A."/>
            <person name="Hufnagl T."/>
            <person name="Barta A."/>
            <person name="Csaszar E."/>
            <person name="Dohnal I."/>
            <person name="Lecourieux D."/>
            <person name="Hirt H."/>
        </authorList>
    </citation>
    <scope>PHOSPHORYLATION [LARGE SCALE ANALYSIS] AT SER-77</scope>
    <scope>IDENTIFICATION BY MASS SPECTROMETRY [LARGE SCALE ANALYSIS]</scope>
</reference>
<reference key="10">
    <citation type="journal article" date="2007" name="Plant J.">
        <title>Alternative splicing of pre-mRNAs of Arabidopsis serine/arginine-rich proteins: regulation by hormones and stresses.</title>
        <authorList>
            <person name="Palusa S.G."/>
            <person name="Ali G.S."/>
            <person name="Reddy A.S."/>
        </authorList>
    </citation>
    <scope>ALTERNATIVE SPLICING</scope>
    <scope>INDUCTION</scope>
</reference>
<reference key="11">
    <citation type="journal article" date="2007" name="PLoS ONE">
        <title>Regulation of plant developmental processes by a novel splicing factor.</title>
        <authorList>
            <person name="Ali G.S."/>
            <person name="Palusa S.G."/>
            <person name="Golovkin M."/>
            <person name="Prasad J."/>
            <person name="Manley J.L."/>
            <person name="Reddy A.S."/>
        </authorList>
    </citation>
    <scope>FUNCTION</scope>
    <scope>DISRUPTION PHENOTYPE</scope>
    <source>
        <strain>cv. Columbia</strain>
    </source>
</reference>
<reference key="12">
    <citation type="journal article" date="2008" name="BMC Genomics">
        <title>Alternative splicing at NAGNAG acceptors in Arabidopsis thaliana SR and SR-related protein-coding genes.</title>
        <authorList>
            <person name="Schindler S."/>
            <person name="Szafranski K."/>
            <person name="Hiller M."/>
            <person name="Ali G.S."/>
            <person name="Palusa S.G."/>
            <person name="Backofen R."/>
            <person name="Platzer M."/>
            <person name="Reddy A.S.N."/>
        </authorList>
    </citation>
    <scope>ALTERNATIVE SPLICING</scope>
</reference>
<reference key="13">
    <citation type="journal article" date="2008" name="PLoS ONE">
        <title>Analyses of in vivo interaction and mobility of two spliceosomal proteins using FRAP and BiFC.</title>
        <authorList>
            <person name="Ali G.S."/>
            <person name="Prasad K.V."/>
            <person name="Hanumappa M."/>
            <person name="Reddy A.S."/>
        </authorList>
    </citation>
    <scope>SUBCELLULAR LOCATION</scope>
    <scope>INTERACTION WITH RNU1</scope>
</reference>
<reference key="14">
    <citation type="journal article" date="2009" name="Plant Cell">
        <title>Dynamic behavior of Arabidopsis eIF4A-III, putative core protein of exon junction complex: fast relocation to nucleolus and splicing speckles under hypoxia.</title>
        <authorList>
            <person name="Koroleva O.A."/>
            <person name="Calder G."/>
            <person name="Pendle A.F."/>
            <person name="Kim S.H."/>
            <person name="Lewandowska D."/>
            <person name="Simpson C.G."/>
            <person name="Jones I.M."/>
            <person name="Brown J.W.S."/>
            <person name="Shaw P.J."/>
        </authorList>
    </citation>
    <scope>SUBCELLULAR LOCATION</scope>
    <source>
        <strain>cv. Columbia</strain>
    </source>
</reference>
<reference key="15">
    <citation type="journal article" date="2009" name="Plant Physiol.">
        <title>Two alternatively spliced isoforms of the Arabidopsis SR45 protein have distinct roles during normal plant development.</title>
        <authorList>
            <person name="Zhang X.-N."/>
            <person name="Mount S.M."/>
        </authorList>
    </citation>
    <scope>FUNCTION</scope>
    <scope>DISRUPTION PHENOTYPE</scope>
    <scope>MUTAGENESIS OF 218-THR-SER-219</scope>
    <scope>TISSUE SPECIFICITY</scope>
    <scope>ALTERNATIVE SPLICING</scope>
    <scope>SUBCELLULAR LOCATION</scope>
    <scope>INDUCTION BY ABIOTIC STRESSES</scope>
</reference>
<reference key="16">
    <citation type="journal article" date="2009" name="Plant Physiol.">
        <title>Large-scale Arabidopsis phosphoproteome profiling reveals novel chloroplast kinase substrates and phosphorylation networks.</title>
        <authorList>
            <person name="Reiland S."/>
            <person name="Messerli G."/>
            <person name="Baerenfaller K."/>
            <person name="Gerrits B."/>
            <person name="Endler A."/>
            <person name="Grossmann J."/>
            <person name="Gruissem W."/>
            <person name="Baginsky S."/>
        </authorList>
    </citation>
    <scope>PHOSPHORYLATION [LARGE SCALE ANALYSIS] AT SER-77 AND SER-256</scope>
    <scope>IDENTIFICATION BY MASS SPECTROMETRY [LARGE SCALE ANALYSIS]</scope>
</reference>
<reference key="17">
    <citation type="journal article" date="2010" name="Plant Cell">
        <title>Implementing a rational and consistent nomenclature for serine/arginine-rich protein splicing factors (SR proteins) in plants.</title>
        <authorList>
            <person name="Barta A."/>
            <person name="Kalyna M."/>
            <person name="Reddy A.S."/>
        </authorList>
    </citation>
    <scope>GENE FAMILY</scope>
</reference>
<reference key="18">
    <citation type="journal article" date="2010" name="Plant Physiol.">
        <title>The plant-specific SR45 protein negatively regulates glucose and ABA signaling during early seedling development in Arabidopsis.</title>
        <authorList>
            <person name="Carvalho R.F."/>
            <person name="Carvalho S.D."/>
            <person name="Duque P."/>
        </authorList>
    </citation>
    <scope>FUNCTION</scope>
    <scope>DISRUPTION PHENOTYPE</scope>
    <source>
        <strain>cv. Columbia</strain>
    </source>
</reference>
<reference key="19">
    <citation type="journal article" date="2011" name="PLoS ONE">
        <title>Comparative analysis of serine/arginine-rich proteins across 27 eukaryotes: insights into sub-family classification and extent of alternative splicing.</title>
        <authorList>
            <person name="Richardson D.N."/>
            <person name="Rogers M.F."/>
            <person name="Labadorf A."/>
            <person name="Ben-Hur A."/>
            <person name="Guo H."/>
            <person name="Paterson A.H."/>
            <person name="Reddy A.S.N."/>
        </authorList>
    </citation>
    <scope>GENE FAMILY</scope>
</reference>
<reference key="20">
    <citation type="journal article" date="2012" name="Epigenetics">
        <title>The splicing factor SR45 affects the RNA-directed DNA methylation pathway in Arabidopsis.</title>
        <authorList>
            <person name="Ausin I."/>
            <person name="Greenberg M.V."/>
            <person name="Li C.F."/>
            <person name="Jacobsen S.E."/>
        </authorList>
    </citation>
    <scope>FUNCTION</scope>
    <scope>DISRUPTION PHENOTYPE</scope>
</reference>
<reference key="21">
    <citation type="journal article" date="2012" name="Plant Cell">
        <title>SKIP is a component of the spliceosome linking alternative splicing and the circadian clock in Arabidopsis.</title>
        <authorList>
            <person name="Wang X."/>
            <person name="Wu F."/>
            <person name="Xie Q."/>
            <person name="Wang H."/>
            <person name="Wang Y."/>
            <person name="Yue Y."/>
            <person name="Gahura O."/>
            <person name="Ma S."/>
            <person name="Liu L."/>
            <person name="Cao Y."/>
            <person name="Jiao Y."/>
            <person name="Puta F."/>
            <person name="McClung C.R."/>
            <person name="Xu X."/>
            <person name="Ma L."/>
        </authorList>
    </citation>
    <scope>INTERACTION WITH SKIP</scope>
</reference>
<reference key="22">
    <citation type="journal article" date="2012" name="Plant J.">
        <title>Interactions of SR45, an SR-like protein, with spliceosomal proteins and an intronic sequence: insights into regulated splicing.</title>
        <authorList>
            <person name="Day I.S."/>
            <person name="Golovkin M."/>
            <person name="Palusa S.G."/>
            <person name="Link A."/>
            <person name="Ali G.S."/>
            <person name="Thomas J."/>
            <person name="Richardson D.N."/>
            <person name="Reddy A.S."/>
        </authorList>
    </citation>
    <scope>FUNCTION</scope>
    <scope>INTERACTION WITH RNU1; U2AF35A AND U2AF35B</scope>
</reference>
<reference key="23">
    <citation type="journal article" date="2013" name="FEBS Lett.">
        <title>CACTIN is an essential nuclear protein in Arabidopsis and may be associated with the eukaryotic spliceosome.</title>
        <authorList>
            <person name="Baldwin K.L."/>
            <person name="Dinh E.M."/>
            <person name="Hart B.M."/>
            <person name="Masson P.H."/>
        </authorList>
    </citation>
    <scope>SUBCELLULAR LOCATION</scope>
</reference>
<reference key="24">
    <citation type="journal article" date="2016" name="Plant Cell">
        <title>The Arabidopsis SR45 splicing factor, a negative regulator of sugar signaling, modulates SNF1-related protein kinase 1 stability.</title>
        <authorList>
            <person name="Carvalho R.F."/>
            <person name="Szakonyi D."/>
            <person name="Simpson C.G."/>
            <person name="Barbosa I.C."/>
            <person name="Brown J.W."/>
            <person name="Baena-Gonzalez E."/>
            <person name="Duque P."/>
        </authorList>
    </citation>
    <scope>FUNCTION</scope>
    <scope>DISRUPTION PHENOTYPE</scope>
</reference>
<dbReference type="EMBL" id="AF151366">
    <property type="protein sequence ID" value="AAF19004.1"/>
    <property type="molecule type" value="mRNA"/>
</dbReference>
<dbReference type="EMBL" id="AC011808">
    <property type="protein sequence ID" value="AAG10821.1"/>
    <property type="molecule type" value="Genomic_DNA"/>
</dbReference>
<dbReference type="EMBL" id="CP002684">
    <property type="protein sequence ID" value="AEE29475.1"/>
    <property type="molecule type" value="Genomic_DNA"/>
</dbReference>
<dbReference type="EMBL" id="CP002684">
    <property type="protein sequence ID" value="AEE29476.1"/>
    <property type="molecule type" value="Genomic_DNA"/>
</dbReference>
<dbReference type="EMBL" id="CP002684">
    <property type="protein sequence ID" value="AEE29477.1"/>
    <property type="molecule type" value="Genomic_DNA"/>
</dbReference>
<dbReference type="EMBL" id="AY045835">
    <property type="protein sequence ID" value="AAK76509.1"/>
    <property type="molecule type" value="mRNA"/>
</dbReference>
<dbReference type="EMBL" id="BT020372">
    <property type="protein sequence ID" value="AAV85727.1"/>
    <property type="molecule type" value="mRNA"/>
</dbReference>
<dbReference type="EMBL" id="BT021095">
    <property type="protein sequence ID" value="AAX12865.1"/>
    <property type="molecule type" value="mRNA"/>
</dbReference>
<dbReference type="PIR" id="C86301">
    <property type="entry name" value="C86301"/>
</dbReference>
<dbReference type="RefSeq" id="NP_001185014.1">
    <molecule id="Q9SEE9-3"/>
    <property type="nucleotide sequence ID" value="NM_001198085.1"/>
</dbReference>
<dbReference type="RefSeq" id="NP_173107.1">
    <molecule id="Q9SEE9-1"/>
    <property type="nucleotide sequence ID" value="NM_101523.4"/>
</dbReference>
<dbReference type="RefSeq" id="NP_973844.1">
    <molecule id="Q9SEE9-2"/>
    <property type="nucleotide sequence ID" value="NM_202115.3"/>
</dbReference>
<dbReference type="SMR" id="Q9SEE9"/>
<dbReference type="BioGRID" id="23470">
    <property type="interactions" value="17"/>
</dbReference>
<dbReference type="FunCoup" id="Q9SEE9">
    <property type="interactions" value="380"/>
</dbReference>
<dbReference type="IntAct" id="Q9SEE9">
    <property type="interactions" value="8"/>
</dbReference>
<dbReference type="MINT" id="Q9SEE9"/>
<dbReference type="STRING" id="3702.Q9SEE9"/>
<dbReference type="iPTMnet" id="Q9SEE9"/>
<dbReference type="PaxDb" id="3702-AT1G16610.3"/>
<dbReference type="ProteomicsDB" id="226709">
    <molecule id="Q9SEE9-1"/>
</dbReference>
<dbReference type="EnsemblPlants" id="AT1G16610.1">
    <molecule id="Q9SEE9-1"/>
    <property type="protein sequence ID" value="AT1G16610.1"/>
    <property type="gene ID" value="AT1G16610"/>
</dbReference>
<dbReference type="EnsemblPlants" id="AT1G16610.2">
    <molecule id="Q9SEE9-2"/>
    <property type="protein sequence ID" value="AT1G16610.2"/>
    <property type="gene ID" value="AT1G16610"/>
</dbReference>
<dbReference type="EnsemblPlants" id="AT1G16610.3">
    <molecule id="Q9SEE9-3"/>
    <property type="protein sequence ID" value="AT1G16610.3"/>
    <property type="gene ID" value="AT1G16610"/>
</dbReference>
<dbReference type="GeneID" id="838230"/>
<dbReference type="Gramene" id="AT1G16610.1">
    <molecule id="Q9SEE9-1"/>
    <property type="protein sequence ID" value="AT1G16610.1"/>
    <property type="gene ID" value="AT1G16610"/>
</dbReference>
<dbReference type="Gramene" id="AT1G16610.2">
    <molecule id="Q9SEE9-2"/>
    <property type="protein sequence ID" value="AT1G16610.2"/>
    <property type="gene ID" value="AT1G16610"/>
</dbReference>
<dbReference type="Gramene" id="AT1G16610.3">
    <molecule id="Q9SEE9-3"/>
    <property type="protein sequence ID" value="AT1G16610.3"/>
    <property type="gene ID" value="AT1G16610"/>
</dbReference>
<dbReference type="KEGG" id="ath:AT1G16610"/>
<dbReference type="Araport" id="AT1G16610"/>
<dbReference type="TAIR" id="AT1G16610">
    <property type="gene designation" value="SR45"/>
</dbReference>
<dbReference type="eggNOG" id="KOG0118">
    <property type="taxonomic scope" value="Eukaryota"/>
</dbReference>
<dbReference type="InParanoid" id="Q9SEE9"/>
<dbReference type="OMA" id="GCNARKS"/>
<dbReference type="CD-CODE" id="4299E36E">
    <property type="entry name" value="Nucleolus"/>
</dbReference>
<dbReference type="PRO" id="PR:Q9SEE9"/>
<dbReference type="Proteomes" id="UP000006548">
    <property type="component" value="Chromosome 1"/>
</dbReference>
<dbReference type="ExpressionAtlas" id="Q9SEE9">
    <property type="expression patterns" value="baseline and differential"/>
</dbReference>
<dbReference type="GO" id="GO:0016607">
    <property type="term" value="C:nuclear speck"/>
    <property type="evidence" value="ECO:0000314"/>
    <property type="project" value="TAIR"/>
</dbReference>
<dbReference type="GO" id="GO:0005730">
    <property type="term" value="C:nucleolus"/>
    <property type="evidence" value="ECO:0007005"/>
    <property type="project" value="TAIR"/>
</dbReference>
<dbReference type="GO" id="GO:0005654">
    <property type="term" value="C:nucleoplasm"/>
    <property type="evidence" value="ECO:0000314"/>
    <property type="project" value="TAIR"/>
</dbReference>
<dbReference type="GO" id="GO:0005681">
    <property type="term" value="C:spliceosomal complex"/>
    <property type="evidence" value="ECO:0007669"/>
    <property type="project" value="UniProtKB-KW"/>
</dbReference>
<dbReference type="GO" id="GO:0003723">
    <property type="term" value="F:RNA binding"/>
    <property type="evidence" value="ECO:0007669"/>
    <property type="project" value="UniProtKB-KW"/>
</dbReference>
<dbReference type="GO" id="GO:0000398">
    <property type="term" value="P:mRNA splicing, via spliceosome"/>
    <property type="evidence" value="ECO:0000353"/>
    <property type="project" value="TAIR"/>
</dbReference>
<dbReference type="GO" id="GO:0000381">
    <property type="term" value="P:regulation of alternative mRNA splicing, via spliceosome"/>
    <property type="evidence" value="ECO:0000315"/>
    <property type="project" value="UniProtKB"/>
</dbReference>
<dbReference type="GO" id="GO:0008380">
    <property type="term" value="P:RNA splicing"/>
    <property type="evidence" value="ECO:0000303"/>
    <property type="project" value="TAIR"/>
</dbReference>
<dbReference type="GO" id="GO:0010182">
    <property type="term" value="P:sugar mediated signaling pathway"/>
    <property type="evidence" value="ECO:0000315"/>
    <property type="project" value="UniProtKB"/>
</dbReference>
<dbReference type="CDD" id="cd12365">
    <property type="entry name" value="RRM_RNPS1"/>
    <property type="match status" value="1"/>
</dbReference>
<dbReference type="FunFam" id="3.30.70.330:FF:000461">
    <property type="entry name" value="Serine/arginine-rich splicing factor SR45"/>
    <property type="match status" value="1"/>
</dbReference>
<dbReference type="Gene3D" id="3.30.70.330">
    <property type="match status" value="1"/>
</dbReference>
<dbReference type="InterPro" id="IPR012677">
    <property type="entry name" value="Nucleotide-bd_a/b_plait_sf"/>
</dbReference>
<dbReference type="InterPro" id="IPR035979">
    <property type="entry name" value="RBD_domain_sf"/>
</dbReference>
<dbReference type="InterPro" id="IPR034201">
    <property type="entry name" value="RNPS1_RRM"/>
</dbReference>
<dbReference type="InterPro" id="IPR000504">
    <property type="entry name" value="RRM_dom"/>
</dbReference>
<dbReference type="PANTHER" id="PTHR15481:SF0">
    <property type="entry name" value="LD23870P-RELATED"/>
    <property type="match status" value="1"/>
</dbReference>
<dbReference type="PANTHER" id="PTHR15481">
    <property type="entry name" value="RIBONUCLEIC ACID BINDING PROTEIN S1"/>
    <property type="match status" value="1"/>
</dbReference>
<dbReference type="Pfam" id="PF00076">
    <property type="entry name" value="RRM_1"/>
    <property type="match status" value="1"/>
</dbReference>
<dbReference type="SMART" id="SM00360">
    <property type="entry name" value="RRM"/>
    <property type="match status" value="1"/>
</dbReference>
<dbReference type="SUPFAM" id="SSF54928">
    <property type="entry name" value="RNA-binding domain, RBD"/>
    <property type="match status" value="1"/>
</dbReference>
<dbReference type="PROSITE" id="PS50102">
    <property type="entry name" value="RRM"/>
    <property type="match status" value="1"/>
</dbReference>
<feature type="chain" id="PRO_0000419679" description="Serine/arginine-rich splicing factor SR45">
    <location>
        <begin position="1"/>
        <end position="414"/>
    </location>
</feature>
<feature type="domain" description="RRM" evidence="1">
    <location>
        <begin position="98"/>
        <end position="176"/>
    </location>
</feature>
<feature type="region of interest" description="Disordered" evidence="3">
    <location>
        <begin position="1"/>
        <end position="95"/>
    </location>
</feature>
<feature type="region of interest" description="Disordered" evidence="3">
    <location>
        <begin position="175"/>
        <end position="414"/>
    </location>
</feature>
<feature type="region of interest" description="Required for isoform 1 function in petal development" evidence="10">
    <location>
        <begin position="218"/>
        <end position="219"/>
    </location>
</feature>
<feature type="short sequence motif" description="Nuclear localization signal 1" evidence="2">
    <location>
        <begin position="62"/>
        <end position="69"/>
    </location>
</feature>
<feature type="short sequence motif" description="Nuclear localization signal 2" evidence="2">
    <location>
        <begin position="229"/>
        <end position="236"/>
    </location>
</feature>
<feature type="short sequence motif" description="Nuclear localization signal 3" evidence="2">
    <location>
        <begin position="284"/>
        <end position="291"/>
    </location>
</feature>
<feature type="short sequence motif" description="Nuclear localization signal 4" evidence="2">
    <location>
        <begin position="318"/>
        <end position="325"/>
    </location>
</feature>
<feature type="short sequence motif" description="Nuclear localization signal 5" evidence="2">
    <location>
        <begin position="338"/>
        <end position="345"/>
    </location>
</feature>
<feature type="short sequence motif" description="Nuclear localization signal 6" evidence="2">
    <location>
        <begin position="373"/>
        <end position="380"/>
    </location>
</feature>
<feature type="compositionally biased region" description="Low complexity" evidence="3">
    <location>
        <begin position="10"/>
        <end position="34"/>
    </location>
</feature>
<feature type="compositionally biased region" description="Low complexity" evidence="3">
    <location>
        <begin position="42"/>
        <end position="60"/>
    </location>
</feature>
<feature type="compositionally biased region" description="Low complexity" evidence="3">
    <location>
        <begin position="176"/>
        <end position="191"/>
    </location>
</feature>
<feature type="compositionally biased region" description="Basic and acidic residues" evidence="3">
    <location>
        <begin position="205"/>
        <end position="220"/>
    </location>
</feature>
<feature type="compositionally biased region" description="Basic residues" evidence="3">
    <location>
        <begin position="228"/>
        <end position="243"/>
    </location>
</feature>
<feature type="compositionally biased region" description="Basic residues" evidence="3">
    <location>
        <begin position="285"/>
        <end position="343"/>
    </location>
</feature>
<feature type="compositionally biased region" description="Basic residues" evidence="3">
    <location>
        <begin position="352"/>
        <end position="363"/>
    </location>
</feature>
<feature type="compositionally biased region" description="Low complexity" evidence="3">
    <location>
        <begin position="364"/>
        <end position="373"/>
    </location>
</feature>
<feature type="compositionally biased region" description="Basic residues" evidence="3">
    <location>
        <begin position="375"/>
        <end position="394"/>
    </location>
</feature>
<feature type="compositionally biased region" description="Pro residues" evidence="3">
    <location>
        <begin position="404"/>
        <end position="414"/>
    </location>
</feature>
<feature type="modified residue" description="Phosphoserine" evidence="25 26">
    <location>
        <position position="77"/>
    </location>
</feature>
<feature type="modified residue" description="Phosphoserine" evidence="26">
    <location>
        <position position="256"/>
    </location>
</feature>
<feature type="splice variant" id="VSP_044313" description="In isoform 2." evidence="19">
    <original>TSPQRKTG</original>
    <variation>R</variation>
    <location>
        <begin position="218"/>
        <end position="225"/>
    </location>
</feature>
<feature type="splice variant" id="VSP_044314" description="In isoform 3." evidence="20">
    <original>K</original>
    <variation>KYVGTHLNFFLG</variation>
    <location>
        <position position="353"/>
    </location>
</feature>
<feature type="mutagenesis site" description="Mimics isoform 2 function in roots." evidence="10">
    <original>TS</original>
    <variation>AA</variation>
    <location>
        <begin position="218"/>
        <end position="219"/>
    </location>
</feature>
<feature type="sequence conflict" description="In Ref. 4; AAK76509." evidence="20" ref="4">
    <original>R</original>
    <variation>P</variation>
    <location>
        <position position="361"/>
    </location>
</feature>
<comment type="function">
    <text evidence="8 10 12 13 14 16">Involved in 5' and 3' splicing site selection of introns, and may bridge the 5' and 3' components of the spliceosome. Isoform 1 is required during flower petal development and isoform 2 is involved in root growth. Negatively regulates glucose and abscisic acid (ABA) signaling during early seedling development. Involved in the RNA-directed DNA methylation pathway (PubMed:22274613). Modulates KIN10 stability in response to sugars, probably through the splicing regulation of 5PTASE13, a protein implicated in the proteasomal degradation of KIN10 (PubMed:27436712).</text>
</comment>
<comment type="subunit">
    <text evidence="4 5 9 14 15">Component of the spliceosome. Interacts with AFC2, U2AF35A, U2AF35B, RNU1, SCL33 and SKIP. The interaction with AFC2 depends on phosphorylation status. Interaction with RNU1 defines initial 5' splice sites and interaction with U2AF35B 3' splice sites in the early stage of spliceosome assembly.</text>
</comment>
<comment type="interaction">
    <interactant intactId="EBI-1792008">
        <id>Q9SEE9</id>
    </interactant>
    <interactant intactId="EBI-2360522">
        <id>Q9LY75</id>
        <label>CYP63</label>
    </interactant>
    <organismsDiffer>false</organismsDiffer>
    <experiments>2</experiments>
</comment>
<comment type="interaction">
    <interactant intactId="EBI-1792008">
        <id>Q9SEE9</id>
    </interactant>
    <interactant intactId="EBI-1633812">
        <id>Q42404</id>
        <label>RNU1</label>
    </interactant>
    <organismsDiffer>false</organismsDiffer>
    <experiments>4</experiments>
</comment>
<comment type="interaction">
    <interactant intactId="EBI-1792008">
        <id>Q9SEE9</id>
    </interactant>
    <interactant intactId="EBI-927103">
        <id>Q9SEU4</id>
        <label>SCL33</label>
    </interactant>
    <organismsDiffer>false</organismsDiffer>
    <experiments>3</experiments>
</comment>
<comment type="subcellular location">
    <subcellularLocation>
        <location evidence="5 6 9 11">Nucleus speckle</location>
    </subcellularLocation>
    <subcellularLocation>
        <location evidence="5 6">Nucleus</location>
        <location evidence="5 6">Nucleoplasm</location>
    </subcellularLocation>
    <text evidence="5 6">Colocalizes with spliceosome components. During interphase, present in both nuclear speckles and nucleoplasm. Nucleoplasm-speckle shuttling protein. The intranuclear distribution and mobility depend on the phosphorylation status, ATP and transcription activity.</text>
</comment>
<comment type="alternative products">
    <event type="alternative splicing"/>
    <isoform>
        <id>Q9SEE9-1</id>
        <name>1</name>
        <name>SR45.1</name>
        <sequence type="displayed"/>
    </isoform>
    <isoform>
        <id>Q9SEE9-2</id>
        <name>2</name>
        <name>SR45.2</name>
        <sequence type="described" ref="VSP_044313"/>
    </isoform>
    <isoform>
        <id>Q9SEE9-3</id>
        <name>3</name>
        <sequence type="described" ref="VSP_044314"/>
    </isoform>
</comment>
<comment type="tissue specificity">
    <text evidence="4 5 10">Especially present in actively growing regions and dividing cells. Mostly expressed in roots (primary and secondary root meristem), shoot apical meristem (SAM), leaf primordia, pollen and inflorescence, and, to a lower extent, in leaves, vascular tissue, hydathode and fruits.</text>
</comment>
<comment type="induction">
    <text evidence="7 10">Levels of the isoform 2 are altered in response to sucrose depletion (Suc) and temperature changes; reduced in cold but increased in warm temperatures.</text>
</comment>
<comment type="PTM">
    <text evidence="4 5">Phosphorylated by AFC2. The phosphorylation status regulates intranuclear distribution.</text>
</comment>
<comment type="disruption phenotype">
    <text evidence="8 10 12 13 16">Several developmental defects, including defects in flower and leaf morphology (petal development), delayed flowering time and root growth. Hypersensitivity to glucose (Glc) and to abscisic acid (ABA) during early seedling growth, accompanied with an enhanced ability to accumulate ABA in response to Glc. DNA methylation establishment and maintenance defects. Altered alternative splicing pattern of several related SR genes.</text>
</comment>
<comment type="miscellaneous">
    <text evidence="21">The splicing pattern of the pre-mRNA is regulated in a tissue-specific manner and by development, and changes in response to various types of abiotic stresses.</text>
</comment>
<comment type="similarity">
    <text evidence="20">Belongs to the splicing factor SR family. SR45 subfamily.</text>
</comment>
<comment type="caution">
    <text evidence="22">According to PubMed:20884799, this protein should not be regarded as a classical SR protein although it could complement an animal in vitro splicing extract deficient in SR proteins.</text>
</comment>
<sequence length="414" mass="45348">MAKPSRGRRSPSVSGSSSRSSSRSRSGSSPSRSISRSRSRSRSLSSSSSPSRSVSSGSRSPPRRGKSPAGPARRGRSPPPPPSKGASSPSKKAVQESLVLHVDSLSRNVNEAHLKEIFGNFGEVIHVEIAMDRAVNLPRGHGYVEFKARADAEKAQLYMDGAQIDGKVVKATFTLPPRQKVSSPPKPVSAAPKRDAPKSDNAAADAEKDGGPRRPRETSPQRKTGLSPRRRSPLPRRGLSPRRRSPDSPHRRRPGSPIRRRGDTPPRRRPASPSRGRSPSSPPPRRYRSPPRGSPRRIRGSPVRRRSPLPLRRRSPPPRRLRSPPRRSPIRRRSRSPIRRPGRSRSSSISPRKGRGPAGRRGRSSSYSSSPSPRRIPRKISRSRSPKRPLRGKRSSSNSSSSSSPPPPPPPRKT</sequence>
<protein>
    <recommendedName>
        <fullName evidence="17">Serine/arginine-rich splicing factor SR45</fullName>
        <shortName evidence="17">At-SR45</shortName>
        <shortName evidence="17">AtSR45</shortName>
    </recommendedName>
    <alternativeName>
        <fullName evidence="18">Serine/arginine-rich ribonucleoprotein 1</fullName>
    </alternativeName>
</protein>
<accession>Q9SEE9</accession>
<accession>F4I4H8</accession>
<accession>Q5E925</accession>
<accession>Q94AS1</accession>
<gene>
    <name evidence="17" type="primary">SR45</name>
    <name evidence="18" type="synonym">RNPS1</name>
    <name evidence="23" type="ordered locus">At1g16610</name>
    <name evidence="24" type="ORF">F19K19.9</name>
</gene>
<organism>
    <name type="scientific">Arabidopsis thaliana</name>
    <name type="common">Mouse-ear cress</name>
    <dbReference type="NCBI Taxonomy" id="3702"/>
    <lineage>
        <taxon>Eukaryota</taxon>
        <taxon>Viridiplantae</taxon>
        <taxon>Streptophyta</taxon>
        <taxon>Embryophyta</taxon>
        <taxon>Tracheophyta</taxon>
        <taxon>Spermatophyta</taxon>
        <taxon>Magnoliopsida</taxon>
        <taxon>eudicotyledons</taxon>
        <taxon>Gunneridae</taxon>
        <taxon>Pentapetalae</taxon>
        <taxon>rosids</taxon>
        <taxon>malvids</taxon>
        <taxon>Brassicales</taxon>
        <taxon>Brassicaceae</taxon>
        <taxon>Camelineae</taxon>
        <taxon>Arabidopsis</taxon>
    </lineage>
</organism>
<keyword id="KW-0025">Alternative splicing</keyword>
<keyword id="KW-0507">mRNA processing</keyword>
<keyword id="KW-0508">mRNA splicing</keyword>
<keyword id="KW-0539">Nucleus</keyword>
<keyword id="KW-0597">Phosphoprotein</keyword>
<keyword id="KW-1185">Reference proteome</keyword>
<keyword id="KW-0677">Repeat</keyword>
<keyword id="KW-0694">RNA-binding</keyword>
<keyword id="KW-0747">Spliceosome</keyword>
<proteinExistence type="evidence at protein level"/>
<evidence type="ECO:0000255" key="1">
    <source>
        <dbReference type="PROSITE-ProRule" id="PRU00176"/>
    </source>
</evidence>
<evidence type="ECO:0000255" key="2">
    <source>
        <dbReference type="PROSITE-ProRule" id="PRU00768"/>
    </source>
</evidence>
<evidence type="ECO:0000256" key="3">
    <source>
        <dbReference type="SAM" id="MobiDB-lite"/>
    </source>
</evidence>
<evidence type="ECO:0000269" key="4">
    <source>
    </source>
</evidence>
<evidence type="ECO:0000269" key="5">
    <source>
    </source>
</evidence>
<evidence type="ECO:0000269" key="6">
    <source>
    </source>
</evidence>
<evidence type="ECO:0000269" key="7">
    <source>
    </source>
</evidence>
<evidence type="ECO:0000269" key="8">
    <source>
    </source>
</evidence>
<evidence type="ECO:0000269" key="9">
    <source>
    </source>
</evidence>
<evidence type="ECO:0000269" key="10">
    <source>
    </source>
</evidence>
<evidence type="ECO:0000269" key="11">
    <source>
    </source>
</evidence>
<evidence type="ECO:0000269" key="12">
    <source>
    </source>
</evidence>
<evidence type="ECO:0000269" key="13">
    <source>
    </source>
</evidence>
<evidence type="ECO:0000269" key="14">
    <source>
    </source>
</evidence>
<evidence type="ECO:0000269" key="15">
    <source>
    </source>
</evidence>
<evidence type="ECO:0000269" key="16">
    <source>
    </source>
</evidence>
<evidence type="ECO:0000303" key="17">
    <source>
    </source>
</evidence>
<evidence type="ECO:0000303" key="18">
    <source>
    </source>
</evidence>
<evidence type="ECO:0000303" key="19">
    <source ref="5"/>
</evidence>
<evidence type="ECO:0000305" key="20"/>
<evidence type="ECO:0000305" key="21">
    <source>
    </source>
</evidence>
<evidence type="ECO:0000305" key="22">
    <source>
    </source>
</evidence>
<evidence type="ECO:0000312" key="23">
    <source>
        <dbReference type="Araport" id="AT1G16610"/>
    </source>
</evidence>
<evidence type="ECO:0000312" key="24">
    <source>
        <dbReference type="EMBL" id="AAG10821.1"/>
    </source>
</evidence>
<evidence type="ECO:0007744" key="25">
    <source>
    </source>
</evidence>
<evidence type="ECO:0007744" key="26">
    <source>
    </source>
</evidence>
<name>SR45_ARATH</name>